<proteinExistence type="inferred from homology"/>
<protein>
    <recommendedName>
        <fullName evidence="1">Glutamate 5-kinase</fullName>
        <ecNumber evidence="1">2.7.2.11</ecNumber>
    </recommendedName>
    <alternativeName>
        <fullName evidence="1">Gamma-glutamyl kinase</fullName>
        <shortName evidence="1">GK</shortName>
    </alternativeName>
</protein>
<evidence type="ECO:0000255" key="1">
    <source>
        <dbReference type="HAMAP-Rule" id="MF_00456"/>
    </source>
</evidence>
<sequence>MSTPSQAEVRRMIAAAGTIVVKVGSSSLTQPSGHLDPDKLDALAAALAQVRLMGGRVVLVSSGAIAAGFGPLGFDSRPVDVATQQATAAVGQGLLMARYETAFGRFGIRVGQILITAEDTIRATQYRNVERTLDRLLDLGVVPIINENDSLASNEIRFGDNDRLSALVANLVRAEALVLLTDVDALYTAPPSQPGSRRVEYVPNVIDALGDIQVSGSGSKVGTGGMVTKLEAARVAAVSGIPTVLTCASNAGPAMMGDPVGTVFAPVKARGSSRRLWIGFAADPRGTIVVDAGAGQAIRGGRASLLAAGALEVHGDFSAGDPVWIDAESGEHLARGLAGFDSEEIPQMLGRNTAQLKRFLGPQYAHPLVHRDNLVLV</sequence>
<dbReference type="EC" id="2.7.2.11" evidence="1"/>
<dbReference type="EMBL" id="AE014295">
    <property type="protein sequence ID" value="AAN25086.1"/>
    <property type="molecule type" value="Genomic_DNA"/>
</dbReference>
<dbReference type="RefSeq" id="NP_696450.1">
    <property type="nucleotide sequence ID" value="NC_004307.2"/>
</dbReference>
<dbReference type="RefSeq" id="WP_007055074.1">
    <property type="nucleotide sequence ID" value="NC_004307.2"/>
</dbReference>
<dbReference type="SMR" id="Q8G4T9"/>
<dbReference type="STRING" id="206672.BL1285"/>
<dbReference type="EnsemblBacteria" id="AAN25086">
    <property type="protein sequence ID" value="AAN25086"/>
    <property type="gene ID" value="BL1285"/>
</dbReference>
<dbReference type="GeneID" id="69578967"/>
<dbReference type="KEGG" id="blo:BL1285"/>
<dbReference type="PATRIC" id="fig|206672.9.peg.1572"/>
<dbReference type="HOGENOM" id="CLU_025400_2_0_11"/>
<dbReference type="OrthoDB" id="9804434at2"/>
<dbReference type="PhylomeDB" id="Q8G4T9"/>
<dbReference type="UniPathway" id="UPA00098">
    <property type="reaction ID" value="UER00359"/>
</dbReference>
<dbReference type="Proteomes" id="UP000000439">
    <property type="component" value="Chromosome"/>
</dbReference>
<dbReference type="GO" id="GO:0005829">
    <property type="term" value="C:cytosol"/>
    <property type="evidence" value="ECO:0007669"/>
    <property type="project" value="TreeGrafter"/>
</dbReference>
<dbReference type="GO" id="GO:0005524">
    <property type="term" value="F:ATP binding"/>
    <property type="evidence" value="ECO:0007669"/>
    <property type="project" value="UniProtKB-KW"/>
</dbReference>
<dbReference type="GO" id="GO:0004349">
    <property type="term" value="F:glutamate 5-kinase activity"/>
    <property type="evidence" value="ECO:0007669"/>
    <property type="project" value="UniProtKB-UniRule"/>
</dbReference>
<dbReference type="GO" id="GO:0003723">
    <property type="term" value="F:RNA binding"/>
    <property type="evidence" value="ECO:0007669"/>
    <property type="project" value="InterPro"/>
</dbReference>
<dbReference type="GO" id="GO:0055129">
    <property type="term" value="P:L-proline biosynthetic process"/>
    <property type="evidence" value="ECO:0007669"/>
    <property type="project" value="UniProtKB-UniRule"/>
</dbReference>
<dbReference type="CDD" id="cd04242">
    <property type="entry name" value="AAK_G5K_ProB"/>
    <property type="match status" value="1"/>
</dbReference>
<dbReference type="CDD" id="cd21157">
    <property type="entry name" value="PUA_G5K"/>
    <property type="match status" value="1"/>
</dbReference>
<dbReference type="FunFam" id="3.40.1160.10:FF:000018">
    <property type="entry name" value="Glutamate 5-kinase"/>
    <property type="match status" value="1"/>
</dbReference>
<dbReference type="Gene3D" id="3.40.1160.10">
    <property type="entry name" value="Acetylglutamate kinase-like"/>
    <property type="match status" value="1"/>
</dbReference>
<dbReference type="Gene3D" id="2.30.130.10">
    <property type="entry name" value="PUA domain"/>
    <property type="match status" value="1"/>
</dbReference>
<dbReference type="HAMAP" id="MF_00456">
    <property type="entry name" value="ProB"/>
    <property type="match status" value="1"/>
</dbReference>
<dbReference type="InterPro" id="IPR036393">
    <property type="entry name" value="AceGlu_kinase-like_sf"/>
</dbReference>
<dbReference type="InterPro" id="IPR001048">
    <property type="entry name" value="Asp/Glu/Uridylate_kinase"/>
</dbReference>
<dbReference type="InterPro" id="IPR041739">
    <property type="entry name" value="G5K_ProB"/>
</dbReference>
<dbReference type="InterPro" id="IPR001057">
    <property type="entry name" value="Glu/AcGlu_kinase"/>
</dbReference>
<dbReference type="InterPro" id="IPR011529">
    <property type="entry name" value="Glu_5kinase"/>
</dbReference>
<dbReference type="InterPro" id="IPR005715">
    <property type="entry name" value="Glu_5kinase/COase_Synthase"/>
</dbReference>
<dbReference type="InterPro" id="IPR019797">
    <property type="entry name" value="Glutamate_5-kinase_CS"/>
</dbReference>
<dbReference type="InterPro" id="IPR002478">
    <property type="entry name" value="PUA"/>
</dbReference>
<dbReference type="InterPro" id="IPR015947">
    <property type="entry name" value="PUA-like_sf"/>
</dbReference>
<dbReference type="InterPro" id="IPR036974">
    <property type="entry name" value="PUA_sf"/>
</dbReference>
<dbReference type="NCBIfam" id="TIGR01027">
    <property type="entry name" value="proB"/>
    <property type="match status" value="1"/>
</dbReference>
<dbReference type="PANTHER" id="PTHR43654">
    <property type="entry name" value="GLUTAMATE 5-KINASE"/>
    <property type="match status" value="1"/>
</dbReference>
<dbReference type="PANTHER" id="PTHR43654:SF1">
    <property type="entry name" value="ISOPENTENYL PHOSPHATE KINASE"/>
    <property type="match status" value="1"/>
</dbReference>
<dbReference type="Pfam" id="PF00696">
    <property type="entry name" value="AA_kinase"/>
    <property type="match status" value="1"/>
</dbReference>
<dbReference type="Pfam" id="PF01472">
    <property type="entry name" value="PUA"/>
    <property type="match status" value="1"/>
</dbReference>
<dbReference type="PIRSF" id="PIRSF000729">
    <property type="entry name" value="GK"/>
    <property type="match status" value="1"/>
</dbReference>
<dbReference type="PRINTS" id="PR00474">
    <property type="entry name" value="GLU5KINASE"/>
</dbReference>
<dbReference type="SMART" id="SM00359">
    <property type="entry name" value="PUA"/>
    <property type="match status" value="1"/>
</dbReference>
<dbReference type="SUPFAM" id="SSF53633">
    <property type="entry name" value="Carbamate kinase-like"/>
    <property type="match status" value="1"/>
</dbReference>
<dbReference type="SUPFAM" id="SSF88697">
    <property type="entry name" value="PUA domain-like"/>
    <property type="match status" value="1"/>
</dbReference>
<dbReference type="PROSITE" id="PS00902">
    <property type="entry name" value="GLUTAMATE_5_KINASE"/>
    <property type="match status" value="1"/>
</dbReference>
<dbReference type="PROSITE" id="PS50890">
    <property type="entry name" value="PUA"/>
    <property type="match status" value="1"/>
</dbReference>
<reference key="1">
    <citation type="journal article" date="2002" name="Proc. Natl. Acad. Sci. U.S.A.">
        <title>The genome sequence of Bifidobacterium longum reflects its adaptation to the human gastrointestinal tract.</title>
        <authorList>
            <person name="Schell M.A."/>
            <person name="Karmirantzou M."/>
            <person name="Snel B."/>
            <person name="Vilanova D."/>
            <person name="Berger B."/>
            <person name="Pessi G."/>
            <person name="Zwahlen M.-C."/>
            <person name="Desiere F."/>
            <person name="Bork P."/>
            <person name="Delley M."/>
            <person name="Pridmore R.D."/>
            <person name="Arigoni F."/>
        </authorList>
    </citation>
    <scope>NUCLEOTIDE SEQUENCE [LARGE SCALE GENOMIC DNA]</scope>
    <source>
        <strain>NCC 2705</strain>
    </source>
</reference>
<organism>
    <name type="scientific">Bifidobacterium longum (strain NCC 2705)</name>
    <dbReference type="NCBI Taxonomy" id="206672"/>
    <lineage>
        <taxon>Bacteria</taxon>
        <taxon>Bacillati</taxon>
        <taxon>Actinomycetota</taxon>
        <taxon>Actinomycetes</taxon>
        <taxon>Bifidobacteriales</taxon>
        <taxon>Bifidobacteriaceae</taxon>
        <taxon>Bifidobacterium</taxon>
    </lineage>
</organism>
<accession>Q8G4T9</accession>
<name>PROB_BIFLO</name>
<keyword id="KW-0028">Amino-acid biosynthesis</keyword>
<keyword id="KW-0067">ATP-binding</keyword>
<keyword id="KW-0963">Cytoplasm</keyword>
<keyword id="KW-0418">Kinase</keyword>
<keyword id="KW-0547">Nucleotide-binding</keyword>
<keyword id="KW-0641">Proline biosynthesis</keyword>
<keyword id="KW-1185">Reference proteome</keyword>
<keyword id="KW-0808">Transferase</keyword>
<gene>
    <name evidence="1" type="primary">proB</name>
    <name type="ordered locus">BL1285</name>
</gene>
<feature type="chain" id="PRO_0000109646" description="Glutamate 5-kinase">
    <location>
        <begin position="1"/>
        <end position="377"/>
    </location>
</feature>
<feature type="domain" description="PUA" evidence="1">
    <location>
        <begin position="285"/>
        <end position="363"/>
    </location>
</feature>
<feature type="binding site" evidence="1">
    <location>
        <position position="22"/>
    </location>
    <ligand>
        <name>ATP</name>
        <dbReference type="ChEBI" id="CHEBI:30616"/>
    </ligand>
</feature>
<feature type="binding site" evidence="1">
    <location>
        <position position="62"/>
    </location>
    <ligand>
        <name>substrate</name>
    </ligand>
</feature>
<feature type="binding site" evidence="1">
    <location>
        <position position="149"/>
    </location>
    <ligand>
        <name>substrate</name>
    </ligand>
</feature>
<feature type="binding site" evidence="1">
    <location>
        <position position="161"/>
    </location>
    <ligand>
        <name>substrate</name>
    </ligand>
</feature>
<feature type="binding site" evidence="1">
    <location>
        <begin position="181"/>
        <end position="182"/>
    </location>
    <ligand>
        <name>ATP</name>
        <dbReference type="ChEBI" id="CHEBI:30616"/>
    </ligand>
</feature>
<feature type="binding site" evidence="1">
    <location>
        <begin position="223"/>
        <end position="229"/>
    </location>
    <ligand>
        <name>ATP</name>
        <dbReference type="ChEBI" id="CHEBI:30616"/>
    </ligand>
</feature>
<comment type="function">
    <text evidence="1">Catalyzes the transfer of a phosphate group to glutamate to form L-glutamate 5-phosphate.</text>
</comment>
<comment type="catalytic activity">
    <reaction evidence="1">
        <text>L-glutamate + ATP = L-glutamyl 5-phosphate + ADP</text>
        <dbReference type="Rhea" id="RHEA:14877"/>
        <dbReference type="ChEBI" id="CHEBI:29985"/>
        <dbReference type="ChEBI" id="CHEBI:30616"/>
        <dbReference type="ChEBI" id="CHEBI:58274"/>
        <dbReference type="ChEBI" id="CHEBI:456216"/>
        <dbReference type="EC" id="2.7.2.11"/>
    </reaction>
</comment>
<comment type="pathway">
    <text evidence="1">Amino-acid biosynthesis; L-proline biosynthesis; L-glutamate 5-semialdehyde from L-glutamate: step 1/2.</text>
</comment>
<comment type="subcellular location">
    <subcellularLocation>
        <location evidence="1">Cytoplasm</location>
    </subcellularLocation>
</comment>
<comment type="similarity">
    <text evidence="1">Belongs to the glutamate 5-kinase family.</text>
</comment>